<evidence type="ECO:0000255" key="1"/>
<evidence type="ECO:0000269" key="2">
    <source>
    </source>
</evidence>
<evidence type="ECO:0000269" key="3">
    <source>
    </source>
</evidence>
<evidence type="ECO:0000269" key="4">
    <source>
    </source>
</evidence>
<evidence type="ECO:0000305" key="5"/>
<organism>
    <name type="scientific">Bacillus subtilis (strain 168)</name>
    <dbReference type="NCBI Taxonomy" id="224308"/>
    <lineage>
        <taxon>Bacteria</taxon>
        <taxon>Bacillati</taxon>
        <taxon>Bacillota</taxon>
        <taxon>Bacilli</taxon>
        <taxon>Bacillales</taxon>
        <taxon>Bacillaceae</taxon>
        <taxon>Bacillus</taxon>
    </lineage>
</organism>
<sequence length="436" mass="49517">MNNIIPIMSLLFKQLYSRQGKKDAIRIAAGLVILAVFEIGLIRQAGIDESVLRKTYIILALLLMNTYMVFLSVTSQWKESYMKLSCLLPISSRSFWLAQSVVLFVDTCLRRTLFFFILPLFLFGNGTLSGAQTLFWLGRFSFFTVYSIIFGVVLSNHFVKKKNLMFLLHAAIFACVCISAALMPAATIPLCAVHILWAVVIDFPVFLQAPPQQGKMHSFMRRSEFSFYKREWNRFISSKAMLLNYAVMAVFSGFFSFQMMNTGIFNQQVIYIVISALLLICSPIALLYSIEKNDRMLLITLPIKRKTMFWAKYRFYSGLLAGGFLLVVMIVGFISGRSISVLTFLQCIELLLAGAYIRLTADEKRPSFSWQTEQQLWSGFSKYRSYLFCLPLFLAILAGTAVSLAVIPIAGLVIVYYLQKQDGGFFDTSKRERLGS</sequence>
<reference key="1">
    <citation type="journal article" date="1997" name="Microbiology">
        <title>The Bacillus subtilis genome from gerBC (311 degrees) to licR (334 degrees).</title>
        <authorList>
            <person name="Presecan E."/>
            <person name="Moszer I."/>
            <person name="Boursier L."/>
            <person name="Cruz Ramos H."/>
            <person name="De La Fuente V."/>
            <person name="Hullo M.-F."/>
            <person name="Lelong C."/>
            <person name="Schleich S."/>
            <person name="Sekowska A."/>
            <person name="Song B.H."/>
            <person name="Villani G."/>
            <person name="Kunst F."/>
            <person name="Danchin A."/>
            <person name="Glaser P."/>
        </authorList>
    </citation>
    <scope>NUCLEOTIDE SEQUENCE [GENOMIC DNA]</scope>
    <source>
        <strain>168</strain>
    </source>
</reference>
<reference key="2">
    <citation type="journal article" date="1997" name="Nature">
        <title>The complete genome sequence of the Gram-positive bacterium Bacillus subtilis.</title>
        <authorList>
            <person name="Kunst F."/>
            <person name="Ogasawara N."/>
            <person name="Moszer I."/>
            <person name="Albertini A.M."/>
            <person name="Alloni G."/>
            <person name="Azevedo V."/>
            <person name="Bertero M.G."/>
            <person name="Bessieres P."/>
            <person name="Bolotin A."/>
            <person name="Borchert S."/>
            <person name="Borriss R."/>
            <person name="Boursier L."/>
            <person name="Brans A."/>
            <person name="Braun M."/>
            <person name="Brignell S.C."/>
            <person name="Bron S."/>
            <person name="Brouillet S."/>
            <person name="Bruschi C.V."/>
            <person name="Caldwell B."/>
            <person name="Capuano V."/>
            <person name="Carter N.M."/>
            <person name="Choi S.-K."/>
            <person name="Codani J.-J."/>
            <person name="Connerton I.F."/>
            <person name="Cummings N.J."/>
            <person name="Daniel R.A."/>
            <person name="Denizot F."/>
            <person name="Devine K.M."/>
            <person name="Duesterhoeft A."/>
            <person name="Ehrlich S.D."/>
            <person name="Emmerson P.T."/>
            <person name="Entian K.-D."/>
            <person name="Errington J."/>
            <person name="Fabret C."/>
            <person name="Ferrari E."/>
            <person name="Foulger D."/>
            <person name="Fritz C."/>
            <person name="Fujita M."/>
            <person name="Fujita Y."/>
            <person name="Fuma S."/>
            <person name="Galizzi A."/>
            <person name="Galleron N."/>
            <person name="Ghim S.-Y."/>
            <person name="Glaser P."/>
            <person name="Goffeau A."/>
            <person name="Golightly E.J."/>
            <person name="Grandi G."/>
            <person name="Guiseppi G."/>
            <person name="Guy B.J."/>
            <person name="Haga K."/>
            <person name="Haiech J."/>
            <person name="Harwood C.R."/>
            <person name="Henaut A."/>
            <person name="Hilbert H."/>
            <person name="Holsappel S."/>
            <person name="Hosono S."/>
            <person name="Hullo M.-F."/>
            <person name="Itaya M."/>
            <person name="Jones L.-M."/>
            <person name="Joris B."/>
            <person name="Karamata D."/>
            <person name="Kasahara Y."/>
            <person name="Klaerr-Blanchard M."/>
            <person name="Klein C."/>
            <person name="Kobayashi Y."/>
            <person name="Koetter P."/>
            <person name="Koningstein G."/>
            <person name="Krogh S."/>
            <person name="Kumano M."/>
            <person name="Kurita K."/>
            <person name="Lapidus A."/>
            <person name="Lardinois S."/>
            <person name="Lauber J."/>
            <person name="Lazarevic V."/>
            <person name="Lee S.-M."/>
            <person name="Levine A."/>
            <person name="Liu H."/>
            <person name="Masuda S."/>
            <person name="Mauel C."/>
            <person name="Medigue C."/>
            <person name="Medina N."/>
            <person name="Mellado R.P."/>
            <person name="Mizuno M."/>
            <person name="Moestl D."/>
            <person name="Nakai S."/>
            <person name="Noback M."/>
            <person name="Noone D."/>
            <person name="O'Reilly M."/>
            <person name="Ogawa K."/>
            <person name="Ogiwara A."/>
            <person name="Oudega B."/>
            <person name="Park S.-H."/>
            <person name="Parro V."/>
            <person name="Pohl T.M."/>
            <person name="Portetelle D."/>
            <person name="Porwollik S."/>
            <person name="Prescott A.M."/>
            <person name="Presecan E."/>
            <person name="Pujic P."/>
            <person name="Purnelle B."/>
            <person name="Rapoport G."/>
            <person name="Rey M."/>
            <person name="Reynolds S."/>
            <person name="Rieger M."/>
            <person name="Rivolta C."/>
            <person name="Rocha E."/>
            <person name="Roche B."/>
            <person name="Rose M."/>
            <person name="Sadaie Y."/>
            <person name="Sato T."/>
            <person name="Scanlan E."/>
            <person name="Schleich S."/>
            <person name="Schroeter R."/>
            <person name="Scoffone F."/>
            <person name="Sekiguchi J."/>
            <person name="Sekowska A."/>
            <person name="Seror S.J."/>
            <person name="Serror P."/>
            <person name="Shin B.-S."/>
            <person name="Soldo B."/>
            <person name="Sorokin A."/>
            <person name="Tacconi E."/>
            <person name="Takagi T."/>
            <person name="Takahashi H."/>
            <person name="Takemaru K."/>
            <person name="Takeuchi M."/>
            <person name="Tamakoshi A."/>
            <person name="Tanaka T."/>
            <person name="Terpstra P."/>
            <person name="Tognoni A."/>
            <person name="Tosato V."/>
            <person name="Uchiyama S."/>
            <person name="Vandenbol M."/>
            <person name="Vannier F."/>
            <person name="Vassarotti A."/>
            <person name="Viari A."/>
            <person name="Wambutt R."/>
            <person name="Wedler E."/>
            <person name="Wedler H."/>
            <person name="Weitzenegger T."/>
            <person name="Winters P."/>
            <person name="Wipat A."/>
            <person name="Yamamoto H."/>
            <person name="Yamane K."/>
            <person name="Yasumoto K."/>
            <person name="Yata K."/>
            <person name="Yoshida K."/>
            <person name="Yoshikawa H.-F."/>
            <person name="Zumstein E."/>
            <person name="Yoshikawa H."/>
            <person name="Danchin A."/>
        </authorList>
    </citation>
    <scope>NUCLEOTIDE SEQUENCE [LARGE SCALE GENOMIC DNA]</scope>
    <source>
        <strain>168</strain>
    </source>
</reference>
<reference key="3">
    <citation type="journal article" date="1999" name="J. Bacteriol.">
        <title>Genes of the sbo-alb locus of Bacillus subtilis are required for production of the antilisterial bacteriocin subtilosin.</title>
        <authorList>
            <person name="Zheng G."/>
            <person name="Yan L.Z."/>
            <person name="Vederas J.C."/>
            <person name="Zuber P."/>
        </authorList>
    </citation>
    <scope>FUNCTION</scope>
    <source>
        <strain>168 / JH642</strain>
        <strain>22a</strain>
    </source>
</reference>
<reference key="4">
    <citation type="journal article" date="2000" name="J. Bacteriol.">
        <title>Mutational analysis of the sbo-alb locus of Bacillus subtilis: identification of genes required for subtilosin production and immunity.</title>
        <authorList>
            <person name="Zheng G."/>
            <person name="Hehn R."/>
            <person name="Zuber P."/>
        </authorList>
    </citation>
    <scope>FUNCTION</scope>
    <source>
        <strain>168 / JH642</strain>
    </source>
</reference>
<reference key="5">
    <citation type="journal article" date="2000" name="J. Bacteriol.">
        <title>Dual control of sbo-alb operon expression by the Spo0 and ResDE systems of signal transduction under anaerobic conditions in Bacillus subtilis.</title>
        <authorList>
            <person name="Nakano M.M."/>
            <person name="Zheng G."/>
            <person name="Zuber P."/>
        </authorList>
    </citation>
    <scope>TRANSCRIPTIONAL REGULATION</scope>
    <source>
        <strain>168 / JH642</strain>
    </source>
</reference>
<dbReference type="EMBL" id="Z80360">
    <property type="protein sequence ID" value="CAB02506.1"/>
    <property type="molecule type" value="Genomic_DNA"/>
</dbReference>
<dbReference type="EMBL" id="AL009126">
    <property type="protein sequence ID" value="CAB15767.1"/>
    <property type="molecule type" value="Genomic_DNA"/>
</dbReference>
<dbReference type="PIR" id="G70058">
    <property type="entry name" value="G70058"/>
</dbReference>
<dbReference type="RefSeq" id="NP_391620.1">
    <property type="nucleotide sequence ID" value="NC_000964.3"/>
</dbReference>
<dbReference type="RefSeq" id="WP_003243158.1">
    <property type="nucleotide sequence ID" value="NZ_OZ025638.1"/>
</dbReference>
<dbReference type="FunCoup" id="P71008">
    <property type="interactions" value="14"/>
</dbReference>
<dbReference type="STRING" id="224308.BSU37400"/>
<dbReference type="PaxDb" id="224308-BSU37400"/>
<dbReference type="EnsemblBacteria" id="CAB15767">
    <property type="protein sequence ID" value="CAB15767"/>
    <property type="gene ID" value="BSU_37400"/>
</dbReference>
<dbReference type="GeneID" id="937053"/>
<dbReference type="KEGG" id="bsu:BSU37400"/>
<dbReference type="PATRIC" id="fig|224308.179.peg.4050"/>
<dbReference type="eggNOG" id="COG0474">
    <property type="taxonomic scope" value="Bacteria"/>
</dbReference>
<dbReference type="InParanoid" id="P71008"/>
<dbReference type="OrthoDB" id="2917730at2"/>
<dbReference type="BioCyc" id="BSUB:BSU37400-MONOMER"/>
<dbReference type="Proteomes" id="UP000001570">
    <property type="component" value="Chromosome"/>
</dbReference>
<dbReference type="GO" id="GO:0005886">
    <property type="term" value="C:plasma membrane"/>
    <property type="evidence" value="ECO:0007669"/>
    <property type="project" value="UniProtKB-SubCell"/>
</dbReference>
<dbReference type="GO" id="GO:0030152">
    <property type="term" value="P:bacteriocin biosynthetic process"/>
    <property type="evidence" value="ECO:0007669"/>
    <property type="project" value="UniProtKB-KW"/>
</dbReference>
<dbReference type="GO" id="GO:0030153">
    <property type="term" value="P:bacteriocin immunity"/>
    <property type="evidence" value="ECO:0007669"/>
    <property type="project" value="UniProtKB-KW"/>
</dbReference>
<accession>P71008</accession>
<keyword id="KW-0045">Antibiotic biosynthesis</keyword>
<keyword id="KW-0871">Bacteriocin biosynthesis</keyword>
<keyword id="KW-0079">Bacteriocin immunity</keyword>
<keyword id="KW-1003">Cell membrane</keyword>
<keyword id="KW-0472">Membrane</keyword>
<keyword id="KW-1185">Reference proteome</keyword>
<keyword id="KW-0812">Transmembrane</keyword>
<keyword id="KW-1133">Transmembrane helix</keyword>
<comment type="function">
    <text evidence="2 3">Involved in the production of the bacteriocin subtilosin. Required for immunity to subtilosin.</text>
</comment>
<comment type="subcellular location">
    <subcellularLocation>
        <location evidence="5">Cell membrane</location>
        <topology evidence="5">Multi-pass membrane protein</topology>
    </subcellularLocation>
</comment>
<comment type="induction">
    <text evidence="4">Transcription is highly induced by oxygen limitation and is under dual and independent control of Spo0A-AbrB and ResDE.</text>
</comment>
<name>ALBD_BACSU</name>
<protein>
    <recommendedName>
        <fullName>Antilisterial bacteriocin subtilosin biosynthesis protein AlbD</fullName>
    </recommendedName>
</protein>
<proteinExistence type="evidence at transcript level"/>
<gene>
    <name type="primary">albD</name>
    <name type="synonym">ywhP</name>
    <name type="ordered locus">BSU37400</name>
</gene>
<feature type="chain" id="PRO_0000064544" description="Antilisterial bacteriocin subtilosin biosynthesis protein AlbD">
    <location>
        <begin position="1"/>
        <end position="436"/>
    </location>
</feature>
<feature type="transmembrane region" description="Helical" evidence="1">
    <location>
        <begin position="27"/>
        <end position="47"/>
    </location>
</feature>
<feature type="transmembrane region" description="Helical" evidence="1">
    <location>
        <begin position="55"/>
        <end position="75"/>
    </location>
</feature>
<feature type="transmembrane region" description="Helical" evidence="1">
    <location>
        <begin position="113"/>
        <end position="133"/>
    </location>
</feature>
<feature type="transmembrane region" description="Helical" evidence="1">
    <location>
        <begin position="134"/>
        <end position="154"/>
    </location>
</feature>
<feature type="transmembrane region" description="Helical" evidence="1">
    <location>
        <begin position="164"/>
        <end position="184"/>
    </location>
</feature>
<feature type="transmembrane region" description="Helical" evidence="1">
    <location>
        <begin position="187"/>
        <end position="207"/>
    </location>
</feature>
<feature type="transmembrane region" description="Helical" evidence="1">
    <location>
        <begin position="240"/>
        <end position="260"/>
    </location>
</feature>
<feature type="transmembrane region" description="Helical" evidence="1">
    <location>
        <begin position="270"/>
        <end position="290"/>
    </location>
</feature>
<feature type="transmembrane region" description="Helical" evidence="1">
    <location>
        <begin position="315"/>
        <end position="335"/>
    </location>
</feature>
<feature type="transmembrane region" description="Helical" evidence="1">
    <location>
        <begin position="395"/>
        <end position="415"/>
    </location>
</feature>